<organism>
    <name type="scientific">Bacillus cereus (strain Q1)</name>
    <dbReference type="NCBI Taxonomy" id="361100"/>
    <lineage>
        <taxon>Bacteria</taxon>
        <taxon>Bacillati</taxon>
        <taxon>Bacillota</taxon>
        <taxon>Bacilli</taxon>
        <taxon>Bacillales</taxon>
        <taxon>Bacillaceae</taxon>
        <taxon>Bacillus</taxon>
        <taxon>Bacillus cereus group</taxon>
    </lineage>
</organism>
<evidence type="ECO:0000255" key="1">
    <source>
        <dbReference type="HAMAP-Rule" id="MF_01200"/>
    </source>
</evidence>
<protein>
    <recommendedName>
        <fullName evidence="1">Orotidine 5'-phosphate decarboxylase</fullName>
        <ecNumber evidence="1">4.1.1.23</ecNumber>
    </recommendedName>
    <alternativeName>
        <fullName evidence="1">OMP decarboxylase</fullName>
        <shortName evidence="1">OMPDCase</shortName>
        <shortName evidence="1">OMPdecase</shortName>
    </alternativeName>
</protein>
<dbReference type="EC" id="4.1.1.23" evidence="1"/>
<dbReference type="EMBL" id="CP000227">
    <property type="protein sequence ID" value="ACM14097.1"/>
    <property type="molecule type" value="Genomic_DNA"/>
</dbReference>
<dbReference type="SMR" id="B9IVW0"/>
<dbReference type="KEGG" id="bcq:BCQ_3669"/>
<dbReference type="HOGENOM" id="CLU_067069_1_1_9"/>
<dbReference type="UniPathway" id="UPA00070">
    <property type="reaction ID" value="UER00120"/>
</dbReference>
<dbReference type="Proteomes" id="UP000000441">
    <property type="component" value="Chromosome"/>
</dbReference>
<dbReference type="GO" id="GO:0005829">
    <property type="term" value="C:cytosol"/>
    <property type="evidence" value="ECO:0007669"/>
    <property type="project" value="TreeGrafter"/>
</dbReference>
<dbReference type="GO" id="GO:0004590">
    <property type="term" value="F:orotidine-5'-phosphate decarboxylase activity"/>
    <property type="evidence" value="ECO:0007669"/>
    <property type="project" value="UniProtKB-UniRule"/>
</dbReference>
<dbReference type="GO" id="GO:0006207">
    <property type="term" value="P:'de novo' pyrimidine nucleobase biosynthetic process"/>
    <property type="evidence" value="ECO:0007669"/>
    <property type="project" value="InterPro"/>
</dbReference>
<dbReference type="GO" id="GO:0044205">
    <property type="term" value="P:'de novo' UMP biosynthetic process"/>
    <property type="evidence" value="ECO:0007669"/>
    <property type="project" value="UniProtKB-UniRule"/>
</dbReference>
<dbReference type="CDD" id="cd04725">
    <property type="entry name" value="OMP_decarboxylase_like"/>
    <property type="match status" value="1"/>
</dbReference>
<dbReference type="FunFam" id="3.20.20.70:FF:000015">
    <property type="entry name" value="Orotidine 5'-phosphate decarboxylase"/>
    <property type="match status" value="1"/>
</dbReference>
<dbReference type="Gene3D" id="3.20.20.70">
    <property type="entry name" value="Aldolase class I"/>
    <property type="match status" value="1"/>
</dbReference>
<dbReference type="HAMAP" id="MF_01200_B">
    <property type="entry name" value="OMPdecase_type1_B"/>
    <property type="match status" value="1"/>
</dbReference>
<dbReference type="InterPro" id="IPR013785">
    <property type="entry name" value="Aldolase_TIM"/>
</dbReference>
<dbReference type="InterPro" id="IPR014732">
    <property type="entry name" value="OMPdecase"/>
</dbReference>
<dbReference type="InterPro" id="IPR018089">
    <property type="entry name" value="OMPdecase_AS"/>
</dbReference>
<dbReference type="InterPro" id="IPR047596">
    <property type="entry name" value="OMPdecase_bac"/>
</dbReference>
<dbReference type="InterPro" id="IPR001754">
    <property type="entry name" value="OMPdeCOase_dom"/>
</dbReference>
<dbReference type="InterPro" id="IPR011060">
    <property type="entry name" value="RibuloseP-bd_barrel"/>
</dbReference>
<dbReference type="NCBIfam" id="NF001273">
    <property type="entry name" value="PRK00230.1"/>
    <property type="match status" value="1"/>
</dbReference>
<dbReference type="NCBIfam" id="TIGR01740">
    <property type="entry name" value="pyrF"/>
    <property type="match status" value="1"/>
</dbReference>
<dbReference type="PANTHER" id="PTHR32119">
    <property type="entry name" value="OROTIDINE 5'-PHOSPHATE DECARBOXYLASE"/>
    <property type="match status" value="1"/>
</dbReference>
<dbReference type="PANTHER" id="PTHR32119:SF2">
    <property type="entry name" value="OROTIDINE 5'-PHOSPHATE DECARBOXYLASE"/>
    <property type="match status" value="1"/>
</dbReference>
<dbReference type="Pfam" id="PF00215">
    <property type="entry name" value="OMPdecase"/>
    <property type="match status" value="1"/>
</dbReference>
<dbReference type="SMART" id="SM00934">
    <property type="entry name" value="OMPdecase"/>
    <property type="match status" value="1"/>
</dbReference>
<dbReference type="SUPFAM" id="SSF51366">
    <property type="entry name" value="Ribulose-phoshate binding barrel"/>
    <property type="match status" value="1"/>
</dbReference>
<dbReference type="PROSITE" id="PS00156">
    <property type="entry name" value="OMPDECASE"/>
    <property type="match status" value="1"/>
</dbReference>
<reference key="1">
    <citation type="journal article" date="2009" name="J. Bacteriol.">
        <title>Complete genome sequence of the extremophilic Bacillus cereus strain Q1 with industrial applications.</title>
        <authorList>
            <person name="Xiong Z."/>
            <person name="Jiang Y."/>
            <person name="Qi D."/>
            <person name="Lu H."/>
            <person name="Yang F."/>
            <person name="Yang J."/>
            <person name="Chen L."/>
            <person name="Sun L."/>
            <person name="Xu X."/>
            <person name="Xue Y."/>
            <person name="Zhu Y."/>
            <person name="Jin Q."/>
        </authorList>
    </citation>
    <scope>NUCLEOTIDE SEQUENCE [LARGE SCALE GENOMIC DNA]</scope>
    <source>
        <strain>Q1</strain>
    </source>
</reference>
<comment type="function">
    <text evidence="1">Catalyzes the decarboxylation of orotidine 5'-monophosphate (OMP) to uridine 5'-monophosphate (UMP).</text>
</comment>
<comment type="catalytic activity">
    <reaction evidence="1">
        <text>orotidine 5'-phosphate + H(+) = UMP + CO2</text>
        <dbReference type="Rhea" id="RHEA:11596"/>
        <dbReference type="ChEBI" id="CHEBI:15378"/>
        <dbReference type="ChEBI" id="CHEBI:16526"/>
        <dbReference type="ChEBI" id="CHEBI:57538"/>
        <dbReference type="ChEBI" id="CHEBI:57865"/>
        <dbReference type="EC" id="4.1.1.23"/>
    </reaction>
</comment>
<comment type="pathway">
    <text evidence="1">Pyrimidine metabolism; UMP biosynthesis via de novo pathway; UMP from orotate: step 2/2.</text>
</comment>
<comment type="subunit">
    <text evidence="1">Homodimer.</text>
</comment>
<comment type="similarity">
    <text evidence="1">Belongs to the OMP decarboxylase family. Type 1 subfamily.</text>
</comment>
<gene>
    <name evidence="1" type="primary">pyrF</name>
    <name type="ordered locus">BCQ_3669</name>
</gene>
<name>PYRF_BACCQ</name>
<sequence length="238" mass="26154">MSQSLIVALDFPGKQDVEQFLRHFEGEELFVKVGMELFYKEGPAIITYLKEKGHKIFLDLKLHDIPNTVKSAMRSLASLDVDMVNVHAAGGNSMMKAAIEGLEEGKQEGKERPICIAVTQLTSTSEAMMKKEIGIEKTLEEAVAHYAKLTKESGLDGVVCSTLEVPKLREVCGDGFVTVTPGIRLASDDVNDQVRVATPKRARELGSSYIVVGRSITKAENPLEAYKTVKQQWEGVTV</sequence>
<keyword id="KW-0210">Decarboxylase</keyword>
<keyword id="KW-0456">Lyase</keyword>
<keyword id="KW-0665">Pyrimidine biosynthesis</keyword>
<accession>B9IVW0</accession>
<proteinExistence type="inferred from homology"/>
<feature type="chain" id="PRO_1000164560" description="Orotidine 5'-phosphate decarboxylase">
    <location>
        <begin position="1"/>
        <end position="238"/>
    </location>
</feature>
<feature type="active site" description="Proton donor" evidence="1">
    <location>
        <position position="61"/>
    </location>
</feature>
<feature type="binding site" evidence="1">
    <location>
        <position position="10"/>
    </location>
    <ligand>
        <name>substrate</name>
    </ligand>
</feature>
<feature type="binding site" evidence="1">
    <location>
        <position position="32"/>
    </location>
    <ligand>
        <name>substrate</name>
    </ligand>
</feature>
<feature type="binding site" evidence="1">
    <location>
        <begin position="59"/>
        <end position="68"/>
    </location>
    <ligand>
        <name>substrate</name>
    </ligand>
</feature>
<feature type="binding site" evidence="1">
    <location>
        <position position="122"/>
    </location>
    <ligand>
        <name>substrate</name>
    </ligand>
</feature>
<feature type="binding site" evidence="1">
    <location>
        <position position="184"/>
    </location>
    <ligand>
        <name>substrate</name>
    </ligand>
</feature>
<feature type="binding site" evidence="1">
    <location>
        <position position="193"/>
    </location>
    <ligand>
        <name>substrate</name>
    </ligand>
</feature>
<feature type="binding site" evidence="1">
    <location>
        <position position="213"/>
    </location>
    <ligand>
        <name>substrate</name>
    </ligand>
</feature>
<feature type="binding site" evidence="1">
    <location>
        <position position="214"/>
    </location>
    <ligand>
        <name>substrate</name>
    </ligand>
</feature>